<comment type="function">
    <text evidence="1">Binds 23S rRNA and is also seen to make contacts with the A and possibly P site tRNAs.</text>
</comment>
<comment type="subunit">
    <text evidence="1">Part of the 50S ribosomal subunit.</text>
</comment>
<comment type="similarity">
    <text evidence="1">Belongs to the universal ribosomal protein uL16 family.</text>
</comment>
<gene>
    <name evidence="1" type="primary">rplP</name>
    <name type="ordered locus">Dhaf_0429</name>
</gene>
<evidence type="ECO:0000255" key="1">
    <source>
        <dbReference type="HAMAP-Rule" id="MF_01342"/>
    </source>
</evidence>
<evidence type="ECO:0000305" key="2"/>
<name>RL16_DESHD</name>
<dbReference type="EMBL" id="CP001336">
    <property type="protein sequence ID" value="ACL18496.1"/>
    <property type="molecule type" value="Genomic_DNA"/>
</dbReference>
<dbReference type="RefSeq" id="WP_015942760.1">
    <property type="nucleotide sequence ID" value="NC_011830.1"/>
</dbReference>
<dbReference type="SMR" id="B8G1X3"/>
<dbReference type="KEGG" id="dhd:Dhaf_0429"/>
<dbReference type="HOGENOM" id="CLU_078858_2_1_9"/>
<dbReference type="Proteomes" id="UP000007726">
    <property type="component" value="Chromosome"/>
</dbReference>
<dbReference type="GO" id="GO:0022625">
    <property type="term" value="C:cytosolic large ribosomal subunit"/>
    <property type="evidence" value="ECO:0007669"/>
    <property type="project" value="TreeGrafter"/>
</dbReference>
<dbReference type="GO" id="GO:0019843">
    <property type="term" value="F:rRNA binding"/>
    <property type="evidence" value="ECO:0007669"/>
    <property type="project" value="UniProtKB-UniRule"/>
</dbReference>
<dbReference type="GO" id="GO:0003735">
    <property type="term" value="F:structural constituent of ribosome"/>
    <property type="evidence" value="ECO:0007669"/>
    <property type="project" value="InterPro"/>
</dbReference>
<dbReference type="GO" id="GO:0000049">
    <property type="term" value="F:tRNA binding"/>
    <property type="evidence" value="ECO:0007669"/>
    <property type="project" value="UniProtKB-KW"/>
</dbReference>
<dbReference type="GO" id="GO:0006412">
    <property type="term" value="P:translation"/>
    <property type="evidence" value="ECO:0007669"/>
    <property type="project" value="UniProtKB-UniRule"/>
</dbReference>
<dbReference type="CDD" id="cd01433">
    <property type="entry name" value="Ribosomal_L16_L10e"/>
    <property type="match status" value="1"/>
</dbReference>
<dbReference type="FunFam" id="3.90.1170.10:FF:000001">
    <property type="entry name" value="50S ribosomal protein L16"/>
    <property type="match status" value="1"/>
</dbReference>
<dbReference type="Gene3D" id="3.90.1170.10">
    <property type="entry name" value="Ribosomal protein L10e/L16"/>
    <property type="match status" value="1"/>
</dbReference>
<dbReference type="HAMAP" id="MF_01342">
    <property type="entry name" value="Ribosomal_uL16"/>
    <property type="match status" value="1"/>
</dbReference>
<dbReference type="InterPro" id="IPR047873">
    <property type="entry name" value="Ribosomal_uL16"/>
</dbReference>
<dbReference type="InterPro" id="IPR000114">
    <property type="entry name" value="Ribosomal_uL16_bact-type"/>
</dbReference>
<dbReference type="InterPro" id="IPR020798">
    <property type="entry name" value="Ribosomal_uL16_CS"/>
</dbReference>
<dbReference type="InterPro" id="IPR016180">
    <property type="entry name" value="Ribosomal_uL16_dom"/>
</dbReference>
<dbReference type="InterPro" id="IPR036920">
    <property type="entry name" value="Ribosomal_uL16_sf"/>
</dbReference>
<dbReference type="NCBIfam" id="TIGR01164">
    <property type="entry name" value="rplP_bact"/>
    <property type="match status" value="1"/>
</dbReference>
<dbReference type="PANTHER" id="PTHR12220">
    <property type="entry name" value="50S/60S RIBOSOMAL PROTEIN L16"/>
    <property type="match status" value="1"/>
</dbReference>
<dbReference type="PANTHER" id="PTHR12220:SF13">
    <property type="entry name" value="LARGE RIBOSOMAL SUBUNIT PROTEIN UL16M"/>
    <property type="match status" value="1"/>
</dbReference>
<dbReference type="Pfam" id="PF00252">
    <property type="entry name" value="Ribosomal_L16"/>
    <property type="match status" value="1"/>
</dbReference>
<dbReference type="PRINTS" id="PR00060">
    <property type="entry name" value="RIBOSOMALL16"/>
</dbReference>
<dbReference type="SUPFAM" id="SSF54686">
    <property type="entry name" value="Ribosomal protein L16p/L10e"/>
    <property type="match status" value="1"/>
</dbReference>
<dbReference type="PROSITE" id="PS00586">
    <property type="entry name" value="RIBOSOMAL_L16_1"/>
    <property type="match status" value="1"/>
</dbReference>
<dbReference type="PROSITE" id="PS00701">
    <property type="entry name" value="RIBOSOMAL_L16_2"/>
    <property type="match status" value="1"/>
</dbReference>
<sequence>MLVPTRVKHRKQHRGRMHGKATRGNVITFGEYGLVAMEPAWITNRQIEAARIAMTRYIKRGGKVWIKIFPDKPITAKPAETRMGSGKGSPEYWVAVVKPGRVMFELAGVPEEIAKEALRLAMHKLPVKCKIVRREELEGGDANEN</sequence>
<accession>B8G1X3</accession>
<keyword id="KW-0687">Ribonucleoprotein</keyword>
<keyword id="KW-0689">Ribosomal protein</keyword>
<keyword id="KW-0694">RNA-binding</keyword>
<keyword id="KW-0699">rRNA-binding</keyword>
<keyword id="KW-0820">tRNA-binding</keyword>
<reference key="1">
    <citation type="journal article" date="2012" name="BMC Microbiol.">
        <title>Genome sequence of Desulfitobacterium hafniense DCB-2, a Gram-positive anaerobe capable of dehalogenation and metal reduction.</title>
        <authorList>
            <person name="Kim S.H."/>
            <person name="Harzman C."/>
            <person name="Davis J.K."/>
            <person name="Hutcheson R."/>
            <person name="Broderick J.B."/>
            <person name="Marsh T.L."/>
            <person name="Tiedje J.M."/>
        </authorList>
    </citation>
    <scope>NUCLEOTIDE SEQUENCE [LARGE SCALE GENOMIC DNA]</scope>
    <source>
        <strain>DSM 10664 / DCB-2</strain>
    </source>
</reference>
<protein>
    <recommendedName>
        <fullName evidence="1">Large ribosomal subunit protein uL16</fullName>
    </recommendedName>
    <alternativeName>
        <fullName evidence="2">50S ribosomal protein L16</fullName>
    </alternativeName>
</protein>
<organism>
    <name type="scientific">Desulfitobacterium hafniense (strain DSM 10664 / DCB-2)</name>
    <dbReference type="NCBI Taxonomy" id="272564"/>
    <lineage>
        <taxon>Bacteria</taxon>
        <taxon>Bacillati</taxon>
        <taxon>Bacillota</taxon>
        <taxon>Clostridia</taxon>
        <taxon>Eubacteriales</taxon>
        <taxon>Desulfitobacteriaceae</taxon>
        <taxon>Desulfitobacterium</taxon>
    </lineage>
</organism>
<feature type="chain" id="PRO_1000166355" description="Large ribosomal subunit protein uL16">
    <location>
        <begin position="1"/>
        <end position="145"/>
    </location>
</feature>
<proteinExistence type="inferred from homology"/>